<name>RS9_GLOVI</name>
<reference key="1">
    <citation type="journal article" date="2003" name="DNA Res.">
        <title>Complete genome structure of Gloeobacter violaceus PCC 7421, a cyanobacterium that lacks thylakoids.</title>
        <authorList>
            <person name="Nakamura Y."/>
            <person name="Kaneko T."/>
            <person name="Sato S."/>
            <person name="Mimuro M."/>
            <person name="Miyashita H."/>
            <person name="Tsuchiya T."/>
            <person name="Sasamoto S."/>
            <person name="Watanabe A."/>
            <person name="Kawashima K."/>
            <person name="Kishida Y."/>
            <person name="Kiyokawa C."/>
            <person name="Kohara M."/>
            <person name="Matsumoto M."/>
            <person name="Matsuno A."/>
            <person name="Nakazaki N."/>
            <person name="Shimpo S."/>
            <person name="Takeuchi C."/>
            <person name="Yamada M."/>
            <person name="Tabata S."/>
        </authorList>
    </citation>
    <scope>NUCLEOTIDE SEQUENCE [LARGE SCALE GENOMIC DNA]</scope>
    <source>
        <strain>ATCC 29082 / PCC 7421</strain>
    </source>
</reference>
<proteinExistence type="inferred from homology"/>
<organism>
    <name type="scientific">Gloeobacter violaceus (strain ATCC 29082 / PCC 7421)</name>
    <dbReference type="NCBI Taxonomy" id="251221"/>
    <lineage>
        <taxon>Bacteria</taxon>
        <taxon>Bacillati</taxon>
        <taxon>Cyanobacteriota</taxon>
        <taxon>Cyanophyceae</taxon>
        <taxon>Gloeobacterales</taxon>
        <taxon>Gloeobacteraceae</taxon>
        <taxon>Gloeobacter</taxon>
    </lineage>
</organism>
<gene>
    <name evidence="1" type="primary">rpsI</name>
    <name evidence="1" type="synonym">rps9</name>
    <name type="ordered locus">glr4419</name>
</gene>
<comment type="similarity">
    <text evidence="1">Belongs to the universal ribosomal protein uS9 family.</text>
</comment>
<sequence>MSQNAAVYWGTGRRKCAIARVRLVPGSGELVINGRPGDEYLHFRQPLMSLAKAPLETLGLENQYNIIVNASGGGVAGQAGAIRLGIARALCELSPDNRRPLKVEGYLSRDPRAKERRKYGLKKARKAPQFSKR</sequence>
<feature type="chain" id="PRO_0000111359" description="Small ribosomal subunit protein uS9">
    <location>
        <begin position="1"/>
        <end position="133"/>
    </location>
</feature>
<feature type="region of interest" description="Disordered" evidence="2">
    <location>
        <begin position="102"/>
        <end position="133"/>
    </location>
</feature>
<feature type="compositionally biased region" description="Basic and acidic residues" evidence="2">
    <location>
        <begin position="102"/>
        <end position="113"/>
    </location>
</feature>
<feature type="compositionally biased region" description="Basic residues" evidence="2">
    <location>
        <begin position="114"/>
        <end position="133"/>
    </location>
</feature>
<accession>Q7ND17</accession>
<dbReference type="EMBL" id="BA000045">
    <property type="protein sequence ID" value="BAC92360.1"/>
    <property type="molecule type" value="Genomic_DNA"/>
</dbReference>
<dbReference type="RefSeq" id="NP_927365.1">
    <property type="nucleotide sequence ID" value="NC_005125.1"/>
</dbReference>
<dbReference type="RefSeq" id="WP_011144402.1">
    <property type="nucleotide sequence ID" value="NC_005125.1"/>
</dbReference>
<dbReference type="SMR" id="Q7ND17"/>
<dbReference type="FunCoup" id="Q7ND17">
    <property type="interactions" value="307"/>
</dbReference>
<dbReference type="STRING" id="251221.gene:10761938"/>
<dbReference type="EnsemblBacteria" id="BAC92360">
    <property type="protein sequence ID" value="BAC92360"/>
    <property type="gene ID" value="BAC92360"/>
</dbReference>
<dbReference type="KEGG" id="gvi:glr4419"/>
<dbReference type="PATRIC" id="fig|251221.4.peg.4449"/>
<dbReference type="eggNOG" id="COG0103">
    <property type="taxonomic scope" value="Bacteria"/>
</dbReference>
<dbReference type="HOGENOM" id="CLU_046483_2_1_3"/>
<dbReference type="InParanoid" id="Q7ND17"/>
<dbReference type="OrthoDB" id="9803965at2"/>
<dbReference type="PhylomeDB" id="Q7ND17"/>
<dbReference type="Proteomes" id="UP000000557">
    <property type="component" value="Chromosome"/>
</dbReference>
<dbReference type="GO" id="GO:0022627">
    <property type="term" value="C:cytosolic small ribosomal subunit"/>
    <property type="evidence" value="ECO:0000318"/>
    <property type="project" value="GO_Central"/>
</dbReference>
<dbReference type="GO" id="GO:0003723">
    <property type="term" value="F:RNA binding"/>
    <property type="evidence" value="ECO:0000318"/>
    <property type="project" value="GO_Central"/>
</dbReference>
<dbReference type="GO" id="GO:0003735">
    <property type="term" value="F:structural constituent of ribosome"/>
    <property type="evidence" value="ECO:0000318"/>
    <property type="project" value="GO_Central"/>
</dbReference>
<dbReference type="GO" id="GO:0006412">
    <property type="term" value="P:translation"/>
    <property type="evidence" value="ECO:0007669"/>
    <property type="project" value="UniProtKB-UniRule"/>
</dbReference>
<dbReference type="FunFam" id="3.30.230.10:FF:000001">
    <property type="entry name" value="30S ribosomal protein S9"/>
    <property type="match status" value="1"/>
</dbReference>
<dbReference type="Gene3D" id="3.30.230.10">
    <property type="match status" value="1"/>
</dbReference>
<dbReference type="HAMAP" id="MF_00532_B">
    <property type="entry name" value="Ribosomal_uS9_B"/>
    <property type="match status" value="1"/>
</dbReference>
<dbReference type="InterPro" id="IPR020568">
    <property type="entry name" value="Ribosomal_Su5_D2-typ_SF"/>
</dbReference>
<dbReference type="InterPro" id="IPR000754">
    <property type="entry name" value="Ribosomal_uS9"/>
</dbReference>
<dbReference type="InterPro" id="IPR023035">
    <property type="entry name" value="Ribosomal_uS9_bac/plastid"/>
</dbReference>
<dbReference type="InterPro" id="IPR020574">
    <property type="entry name" value="Ribosomal_uS9_CS"/>
</dbReference>
<dbReference type="InterPro" id="IPR014721">
    <property type="entry name" value="Ribsml_uS5_D2-typ_fold_subgr"/>
</dbReference>
<dbReference type="NCBIfam" id="NF001099">
    <property type="entry name" value="PRK00132.1"/>
    <property type="match status" value="1"/>
</dbReference>
<dbReference type="PANTHER" id="PTHR21569">
    <property type="entry name" value="RIBOSOMAL PROTEIN S9"/>
    <property type="match status" value="1"/>
</dbReference>
<dbReference type="PANTHER" id="PTHR21569:SF1">
    <property type="entry name" value="SMALL RIBOSOMAL SUBUNIT PROTEIN US9M"/>
    <property type="match status" value="1"/>
</dbReference>
<dbReference type="Pfam" id="PF00380">
    <property type="entry name" value="Ribosomal_S9"/>
    <property type="match status" value="1"/>
</dbReference>
<dbReference type="SUPFAM" id="SSF54211">
    <property type="entry name" value="Ribosomal protein S5 domain 2-like"/>
    <property type="match status" value="1"/>
</dbReference>
<dbReference type="PROSITE" id="PS00360">
    <property type="entry name" value="RIBOSOMAL_S9"/>
    <property type="match status" value="1"/>
</dbReference>
<evidence type="ECO:0000255" key="1">
    <source>
        <dbReference type="HAMAP-Rule" id="MF_00532"/>
    </source>
</evidence>
<evidence type="ECO:0000256" key="2">
    <source>
        <dbReference type="SAM" id="MobiDB-lite"/>
    </source>
</evidence>
<evidence type="ECO:0000305" key="3"/>
<keyword id="KW-1185">Reference proteome</keyword>
<keyword id="KW-0687">Ribonucleoprotein</keyword>
<keyword id="KW-0689">Ribosomal protein</keyword>
<protein>
    <recommendedName>
        <fullName evidence="1">Small ribosomal subunit protein uS9</fullName>
    </recommendedName>
    <alternativeName>
        <fullName evidence="3">30S ribosomal protein S9</fullName>
    </alternativeName>
</protein>